<organism>
    <name type="scientific">Pan troglodytes</name>
    <name type="common">Chimpanzee</name>
    <dbReference type="NCBI Taxonomy" id="9598"/>
    <lineage>
        <taxon>Eukaryota</taxon>
        <taxon>Metazoa</taxon>
        <taxon>Chordata</taxon>
        <taxon>Craniata</taxon>
        <taxon>Vertebrata</taxon>
        <taxon>Euteleostomi</taxon>
        <taxon>Mammalia</taxon>
        <taxon>Eutheria</taxon>
        <taxon>Euarchontoglires</taxon>
        <taxon>Primates</taxon>
        <taxon>Haplorrhini</taxon>
        <taxon>Catarrhini</taxon>
        <taxon>Hominidae</taxon>
        <taxon>Pan</taxon>
    </lineage>
</organism>
<keyword id="KW-0903">Direct protein sequencing</keyword>
<keyword id="KW-0349">Heme</keyword>
<keyword id="KW-0408">Iron</keyword>
<keyword id="KW-0479">Metal-binding</keyword>
<keyword id="KW-0561">Oxygen transport</keyword>
<keyword id="KW-0597">Phosphoprotein</keyword>
<keyword id="KW-1185">Reference proteome</keyword>
<keyword id="KW-0813">Transport</keyword>
<name>HBD_PANTR</name>
<proteinExistence type="evidence at protein level"/>
<gene>
    <name type="primary">HBD</name>
</gene>
<sequence length="147" mass="16023">MVHLTPEEKTAVNALWGKVNVDAVGGEALGRLLVVYPWTQRFFESFGDLSSPDAVMGNPKVKAHGKKVLGAFSDGLAHLDNLKGTFSQLSELHCDKLHVDPENFRLLGNVLVCVLARNFGKEFTPQVQAAYQKVVAGVANALAHKYH</sequence>
<protein>
    <recommendedName>
        <fullName>Hemoglobin subunit delta</fullName>
    </recommendedName>
    <alternativeName>
        <fullName>Delta-globin</fullName>
    </alternativeName>
    <alternativeName>
        <fullName>Hemoglobin delta chain</fullName>
    </alternativeName>
</protein>
<reference key="1">
    <citation type="journal article" date="2002" name="Mutat. Res.">
        <title>Analysis of variation in the human beta-globin gene cluster using a novel DHPLC technique.</title>
        <authorList>
            <person name="Webster M.T."/>
            <person name="Wells R.S."/>
            <person name="Clegg J.B."/>
        </authorList>
    </citation>
    <scope>NUCLEOTIDE SEQUENCE [GENOMIC DNA]</scope>
</reference>
<reference key="2">
    <citation type="journal article" date="1971" name="Biochem. Genet.">
        <title>Primate hemoglobins: some sequences and some proposals concerning the character of evolution and mutation.</title>
        <authorList>
            <person name="Boyer S.H."/>
            <person name="Crosby E.F."/>
            <person name="Noyes A.N."/>
            <person name="Fuller G.F."/>
            <person name="Leslie S.E."/>
            <person name="Donaldson L.J."/>
            <person name="Vrablik G.R."/>
            <person name="Schaefer E.W. Jr."/>
            <person name="Thurmon T.F."/>
        </authorList>
    </citation>
    <scope>PROTEIN SEQUENCE OF 2-147</scope>
</reference>
<reference key="3">
    <citation type="journal article" date="1971" name="Nature New Biol.">
        <title>Structure of the delta-chain of chimpanzee haemoglobin A 2.</title>
        <authorList>
            <person name="de Jong W.W.W."/>
        </authorList>
    </citation>
    <scope>PROTEIN SEQUENCE OF 2-147</scope>
</reference>
<feature type="initiator methionine" description="Removed" evidence="3 4">
    <location>
        <position position="1"/>
    </location>
</feature>
<feature type="chain" id="PRO_0000053169" description="Hemoglobin subunit delta">
    <location>
        <begin position="2"/>
        <end position="147"/>
    </location>
</feature>
<feature type="domain" description="Globin" evidence="2">
    <location>
        <begin position="3"/>
        <end position="147"/>
    </location>
</feature>
<feature type="binding site" description="distal binding residue">
    <location>
        <position position="64"/>
    </location>
    <ligand>
        <name>heme b</name>
        <dbReference type="ChEBI" id="CHEBI:60344"/>
    </ligand>
    <ligandPart>
        <name>Fe</name>
        <dbReference type="ChEBI" id="CHEBI:18248"/>
    </ligandPart>
</feature>
<feature type="binding site" description="proximal binding residue">
    <location>
        <position position="93"/>
    </location>
    <ligand>
        <name>heme b</name>
        <dbReference type="ChEBI" id="CHEBI:60344"/>
    </ligand>
    <ligandPart>
        <name>Fe</name>
        <dbReference type="ChEBI" id="CHEBI:18248"/>
    </ligandPart>
</feature>
<feature type="modified residue" description="Phosphoserine" evidence="1">
    <location>
        <position position="51"/>
    </location>
</feature>
<evidence type="ECO:0000250" key="1">
    <source>
        <dbReference type="UniProtKB" id="P02042"/>
    </source>
</evidence>
<evidence type="ECO:0000255" key="2">
    <source>
        <dbReference type="PROSITE-ProRule" id="PRU00238"/>
    </source>
</evidence>
<evidence type="ECO:0000269" key="3">
    <source>
    </source>
</evidence>
<evidence type="ECO:0000269" key="4">
    <source>
    </source>
</evidence>
<dbReference type="EMBL" id="AF339363">
    <property type="protein sequence ID" value="AAL72101.1"/>
    <property type="molecule type" value="Genomic_DNA"/>
</dbReference>
<dbReference type="PIR" id="C90233">
    <property type="entry name" value="HDCZ"/>
</dbReference>
<dbReference type="RefSeq" id="XP_001162045.2">
    <property type="nucleotide sequence ID" value="XM_001162045.4"/>
</dbReference>
<dbReference type="SMR" id="P61772"/>
<dbReference type="FunCoup" id="P61772">
    <property type="interactions" value="23"/>
</dbReference>
<dbReference type="STRING" id="9598.ENSPTRP00000054849"/>
<dbReference type="PaxDb" id="9598-ENSPTRP00000054849"/>
<dbReference type="Ensembl" id="ENSPTRT00000062293.2">
    <property type="protein sequence ID" value="ENSPTRP00000054849.1"/>
    <property type="gene ID" value="ENSPTRG00000003238.7"/>
</dbReference>
<dbReference type="GeneID" id="748577"/>
<dbReference type="KEGG" id="ptr:748577"/>
<dbReference type="CTD" id="3045"/>
<dbReference type="VGNC" id="VGNC:3253">
    <property type="gene designation" value="HBD"/>
</dbReference>
<dbReference type="eggNOG" id="KOG3378">
    <property type="taxonomic scope" value="Eukaryota"/>
</dbReference>
<dbReference type="GeneTree" id="ENSGT00940000163476"/>
<dbReference type="HOGENOM" id="CLU_003827_10_0_1"/>
<dbReference type="InParanoid" id="P61772"/>
<dbReference type="OMA" id="MVEWSEN"/>
<dbReference type="OrthoDB" id="759at9604"/>
<dbReference type="TreeFam" id="TF333268"/>
<dbReference type="Proteomes" id="UP000002277">
    <property type="component" value="Chromosome 11"/>
</dbReference>
<dbReference type="Bgee" id="ENSPTRG00000003238">
    <property type="expression patterns" value="Expressed in bone marrow and 7 other cell types or tissues"/>
</dbReference>
<dbReference type="GO" id="GO:0031838">
    <property type="term" value="C:haptoglobin-hemoglobin complex"/>
    <property type="evidence" value="ECO:0000318"/>
    <property type="project" value="GO_Central"/>
</dbReference>
<dbReference type="GO" id="GO:0005833">
    <property type="term" value="C:hemoglobin complex"/>
    <property type="evidence" value="ECO:0000318"/>
    <property type="project" value="GO_Central"/>
</dbReference>
<dbReference type="GO" id="GO:0020037">
    <property type="term" value="F:heme binding"/>
    <property type="evidence" value="ECO:0000318"/>
    <property type="project" value="GO_Central"/>
</dbReference>
<dbReference type="GO" id="GO:0031721">
    <property type="term" value="F:hemoglobin alpha binding"/>
    <property type="evidence" value="ECO:0000318"/>
    <property type="project" value="GO_Central"/>
</dbReference>
<dbReference type="GO" id="GO:0046872">
    <property type="term" value="F:metal ion binding"/>
    <property type="evidence" value="ECO:0007669"/>
    <property type="project" value="UniProtKB-KW"/>
</dbReference>
<dbReference type="GO" id="GO:0019825">
    <property type="term" value="F:oxygen binding"/>
    <property type="evidence" value="ECO:0000318"/>
    <property type="project" value="GO_Central"/>
</dbReference>
<dbReference type="GO" id="GO:0005344">
    <property type="term" value="F:oxygen carrier activity"/>
    <property type="evidence" value="ECO:0000318"/>
    <property type="project" value="GO_Central"/>
</dbReference>
<dbReference type="GO" id="GO:0098869">
    <property type="term" value="P:cellular oxidant detoxification"/>
    <property type="evidence" value="ECO:0007669"/>
    <property type="project" value="GOC"/>
</dbReference>
<dbReference type="GO" id="GO:0042744">
    <property type="term" value="P:hydrogen peroxide catabolic process"/>
    <property type="evidence" value="ECO:0000318"/>
    <property type="project" value="GO_Central"/>
</dbReference>
<dbReference type="CDD" id="cd08925">
    <property type="entry name" value="Hb-beta-like"/>
    <property type="match status" value="1"/>
</dbReference>
<dbReference type="FunFam" id="1.10.490.10:FF:000001">
    <property type="entry name" value="Hemoglobin subunit beta"/>
    <property type="match status" value="1"/>
</dbReference>
<dbReference type="Gene3D" id="1.10.490.10">
    <property type="entry name" value="Globins"/>
    <property type="match status" value="1"/>
</dbReference>
<dbReference type="InterPro" id="IPR000971">
    <property type="entry name" value="Globin"/>
</dbReference>
<dbReference type="InterPro" id="IPR009050">
    <property type="entry name" value="Globin-like_sf"/>
</dbReference>
<dbReference type="InterPro" id="IPR012292">
    <property type="entry name" value="Globin/Proto"/>
</dbReference>
<dbReference type="InterPro" id="IPR002337">
    <property type="entry name" value="Hemoglobin_b"/>
</dbReference>
<dbReference type="InterPro" id="IPR050056">
    <property type="entry name" value="Hemoglobin_oxygen_transport"/>
</dbReference>
<dbReference type="PANTHER" id="PTHR11442">
    <property type="entry name" value="HEMOGLOBIN FAMILY MEMBER"/>
    <property type="match status" value="1"/>
</dbReference>
<dbReference type="PANTHER" id="PTHR11442:SF42">
    <property type="entry name" value="HEMOGLOBIN SUBUNIT BETA"/>
    <property type="match status" value="1"/>
</dbReference>
<dbReference type="Pfam" id="PF00042">
    <property type="entry name" value="Globin"/>
    <property type="match status" value="1"/>
</dbReference>
<dbReference type="PRINTS" id="PR00814">
    <property type="entry name" value="BETAHAEM"/>
</dbReference>
<dbReference type="SUPFAM" id="SSF46458">
    <property type="entry name" value="Globin-like"/>
    <property type="match status" value="1"/>
</dbReference>
<dbReference type="PROSITE" id="PS01033">
    <property type="entry name" value="GLOBIN"/>
    <property type="match status" value="1"/>
</dbReference>
<comment type="subunit">
    <text>Heterotetramer of two delta chains and two alpha chains.</text>
</comment>
<comment type="tissue specificity">
    <text>Red blood cells.</text>
</comment>
<comment type="similarity">
    <text evidence="2">Belongs to the globin family.</text>
</comment>
<accession>P61772</accession>
<accession>P02043</accession>